<comment type="function">
    <text evidence="2">A cholesterol-dependent toxin that causes cytolysis by forming pores in cholesterol containing host membranes. After binding to target membranes, the protein undergoes a major conformation change, leading to its insertion in the host membrane and formation of an oligomeric pore complex. Cholesterol is required for binding to host membranes, membrane insertion and pore formation; cholesterol binding is mediated by a Thr-Leu pair in the C-terminus. Acts as a major virulence factor required for the escape of bacteria from phagosomal vacuoles and entry into the host cytosol. Can be reversibly inactivated by oxidation.</text>
</comment>
<comment type="activity regulation">
    <text evidence="2">Activity of listeriolysin O is regulated on multiple levels. It should be high in the phagosome, thereby allowing escape of the bacteria from the phagosomal compartment. Then, once inside the host cytosol, the activity must be controlled to prevent lysis of the host plasma membrane and loss of the intracellular environment.</text>
</comment>
<comment type="subunit">
    <text evidence="3">Homooligomeric pore complex of 35 to 50 subunits; when inserted in the host membrane.</text>
</comment>
<comment type="subcellular location">
    <subcellularLocation>
        <location evidence="2">Secreted</location>
    </subcellularLocation>
    <subcellularLocation>
        <location evidence="2">Host membrane</location>
        <topology evidence="3">Multi-pass membrane protein</topology>
    </subcellularLocation>
    <subcellularLocation>
        <location evidence="2">Host cell membrane</location>
        <topology evidence="3">Multi-pass membrane protein</topology>
    </subcellularLocation>
    <text evidence="3">Secreted as soluble protein that then inserts into the host membrane and forms pores formed by transmembrane beta-strands.</text>
</comment>
<comment type="similarity">
    <text evidence="6">Belongs to the cholesterol-dependent cytolysin family.</text>
</comment>
<dbReference type="EMBL" id="CP001175">
    <property type="protein sequence ID" value="ACK40776.1"/>
    <property type="molecule type" value="Genomic_DNA"/>
</dbReference>
<dbReference type="RefSeq" id="WP_012582095.1">
    <property type="nucleotide sequence ID" value="NC_011660.1"/>
</dbReference>
<dbReference type="SMR" id="B8DGM3"/>
<dbReference type="KEGG" id="lmh:LMHCC_2441"/>
<dbReference type="HOGENOM" id="CLU_026912_0_0_9"/>
<dbReference type="GO" id="GO:0005576">
    <property type="term" value="C:extracellular region"/>
    <property type="evidence" value="ECO:0007669"/>
    <property type="project" value="UniProtKB-SubCell"/>
</dbReference>
<dbReference type="GO" id="GO:0020002">
    <property type="term" value="C:host cell plasma membrane"/>
    <property type="evidence" value="ECO:0007669"/>
    <property type="project" value="UniProtKB-SubCell"/>
</dbReference>
<dbReference type="GO" id="GO:0016020">
    <property type="term" value="C:membrane"/>
    <property type="evidence" value="ECO:0007669"/>
    <property type="project" value="UniProtKB-KW"/>
</dbReference>
<dbReference type="GO" id="GO:0015485">
    <property type="term" value="F:cholesterol binding"/>
    <property type="evidence" value="ECO:0007669"/>
    <property type="project" value="InterPro"/>
</dbReference>
<dbReference type="GO" id="GO:0090729">
    <property type="term" value="F:toxin activity"/>
    <property type="evidence" value="ECO:0007669"/>
    <property type="project" value="UniProtKB-KW"/>
</dbReference>
<dbReference type="GO" id="GO:0031640">
    <property type="term" value="P:killing of cells of another organism"/>
    <property type="evidence" value="ECO:0007669"/>
    <property type="project" value="UniProtKB-KW"/>
</dbReference>
<dbReference type="FunFam" id="2.60.40.1430:FF:000001">
    <property type="entry name" value="Thiol-activated cytolysin"/>
    <property type="match status" value="1"/>
</dbReference>
<dbReference type="Gene3D" id="3.30.1040.20">
    <property type="match status" value="1"/>
</dbReference>
<dbReference type="Gene3D" id="3.40.30.40">
    <property type="entry name" value="Perfringolysin"/>
    <property type="match status" value="1"/>
</dbReference>
<dbReference type="Gene3D" id="2.60.40.1430">
    <property type="entry name" value="Perfringolysin, domain 4"/>
    <property type="match status" value="1"/>
</dbReference>
<dbReference type="Gene3D" id="3.90.840.10">
    <property type="entry name" value="Thiol-activated cytolysin superfamily/Thiol-activated cytolysin, alpha-beta domain"/>
    <property type="match status" value="1"/>
</dbReference>
<dbReference type="InterPro" id="IPR035390">
    <property type="entry name" value="Thiol_cytolys_C"/>
</dbReference>
<dbReference type="InterPro" id="IPR038700">
    <property type="entry name" value="Thiol_cytolys_C_sf"/>
</dbReference>
<dbReference type="InterPro" id="IPR001869">
    <property type="entry name" value="Thiol_cytolysin"/>
</dbReference>
<dbReference type="InterPro" id="IPR036363">
    <property type="entry name" value="Thiol_cytolysin_ab_sf"/>
</dbReference>
<dbReference type="InterPro" id="IPR036359">
    <property type="entry name" value="Thiol_cytolysin_sf"/>
</dbReference>
<dbReference type="Pfam" id="PF17440">
    <property type="entry name" value="Thiol_cytolys_C"/>
    <property type="match status" value="1"/>
</dbReference>
<dbReference type="Pfam" id="PF01289">
    <property type="entry name" value="Thiol_cytolysin"/>
    <property type="match status" value="1"/>
</dbReference>
<dbReference type="PRINTS" id="PR01400">
    <property type="entry name" value="TACYTOLYSIN"/>
</dbReference>
<dbReference type="SUPFAM" id="SSF56978">
    <property type="entry name" value="Perfringolysin"/>
    <property type="match status" value="1"/>
</dbReference>
<dbReference type="PROSITE" id="PS00481">
    <property type="entry name" value="THIOL_CYTOLYSINS"/>
    <property type="match status" value="1"/>
</dbReference>
<proteinExistence type="inferred from homology"/>
<protein>
    <recommendedName>
        <fullName>Listeriolysin O</fullName>
    </recommendedName>
    <alternativeName>
        <fullName>LLO</fullName>
    </alternativeName>
    <alternativeName>
        <fullName>Thiol-activated cytolysin</fullName>
    </alternativeName>
</protein>
<organism>
    <name type="scientific">Listeria monocytogenes serotype 4a (strain HCC23)</name>
    <dbReference type="NCBI Taxonomy" id="552536"/>
    <lineage>
        <taxon>Bacteria</taxon>
        <taxon>Bacillati</taxon>
        <taxon>Bacillota</taxon>
        <taxon>Bacilli</taxon>
        <taxon>Bacillales</taxon>
        <taxon>Listeriaceae</taxon>
        <taxon>Listeria</taxon>
    </lineage>
</organism>
<reference key="1">
    <citation type="journal article" date="2011" name="J. Bacteriol.">
        <title>Genome sequence of lineage III Listeria monocytogenes strain HCC23.</title>
        <authorList>
            <person name="Steele C.L."/>
            <person name="Donaldson J.R."/>
            <person name="Paul D."/>
            <person name="Banes M.M."/>
            <person name="Arick T."/>
            <person name="Bridges S.M."/>
            <person name="Lawrence M.L."/>
        </authorList>
    </citation>
    <scope>NUCLEOTIDE SEQUENCE [LARGE SCALE GENOMIC DNA]</scope>
    <source>
        <strain>HCC23</strain>
    </source>
</reference>
<keyword id="KW-0204">Cytolysis</keyword>
<keyword id="KW-0354">Hemolysis</keyword>
<keyword id="KW-1032">Host cell membrane</keyword>
<keyword id="KW-1043">Host membrane</keyword>
<keyword id="KW-0446">Lipid-binding</keyword>
<keyword id="KW-0472">Membrane</keyword>
<keyword id="KW-0964">Secreted</keyword>
<keyword id="KW-0732">Signal</keyword>
<keyword id="KW-0800">Toxin</keyword>
<keyword id="KW-0812">Transmembrane</keyword>
<keyword id="KW-1134">Transmembrane beta strand</keyword>
<keyword id="KW-0843">Virulence</keyword>
<accession>B8DGM3</accession>
<feature type="signal peptide" evidence="4">
    <location>
        <begin position="1"/>
        <end position="24"/>
    </location>
</feature>
<feature type="chain" id="PRO_0000396803" description="Listeriolysin O">
    <location>
        <begin position="25"/>
        <end position="529"/>
    </location>
</feature>
<feature type="transmembrane region" description="Beta stranded" evidence="3">
    <location>
        <begin position="214"/>
        <end position="227"/>
    </location>
</feature>
<feature type="transmembrane region" description="Beta stranded" evidence="3">
    <location>
        <begin position="234"/>
        <end position="243"/>
    </location>
</feature>
<feature type="transmembrane region" description="Beta stranded" evidence="3">
    <location>
        <begin position="312"/>
        <end position="321"/>
    </location>
</feature>
<feature type="transmembrane region" description="Beta stranded" evidence="3">
    <location>
        <begin position="329"/>
        <end position="341"/>
    </location>
</feature>
<feature type="region of interest" description="Disordered" evidence="5">
    <location>
        <begin position="35"/>
        <end position="54"/>
    </location>
</feature>
<feature type="short sequence motif" description="Conserved undecapeptide" evidence="6">
    <location>
        <begin position="483"/>
        <end position="493"/>
    </location>
</feature>
<feature type="short sequence motif" description="Cholesterol binding" evidence="1">
    <location>
        <begin position="515"/>
        <end position="516"/>
    </location>
</feature>
<evidence type="ECO:0000250" key="1">
    <source>
        <dbReference type="UniProtKB" id="P0C2E9"/>
    </source>
</evidence>
<evidence type="ECO:0000250" key="2">
    <source>
        <dbReference type="UniProtKB" id="P13128"/>
    </source>
</evidence>
<evidence type="ECO:0000250" key="3">
    <source>
        <dbReference type="UniProtKB" id="Q04IN8"/>
    </source>
</evidence>
<evidence type="ECO:0000255" key="4"/>
<evidence type="ECO:0000256" key="5">
    <source>
        <dbReference type="SAM" id="MobiDB-lite"/>
    </source>
</evidence>
<evidence type="ECO:0000305" key="6"/>
<name>TACY_LISMH</name>
<gene>
    <name type="primary">hly</name>
    <name type="ordered locus">LMHCC_2441</name>
</gene>
<sequence length="529" mass="58675">MKKIMLVFITLILISLPIAQQTEAKDASAFNKENSISSMAPPASPPASPKTPIEKKHADEIDKYIQGLDYNKNNVLVYHGDAVTNVPPRKGYKDGNEYIVVEKKKKSINQNNADIQVVNAISSLTYPGALVKANSELVENQPDVLPVKRDSLTLSIDLPGMTNQDNKIVVKNATKSNVNNAVNTLVERWNEKYAQAYPNVSAKIDYDDEMAYSESQLIAKFGTAFKAVNNSLNVNFGAISEGKMQEEVISFKQIYYNVNVNEPTRPSRFFGKAVTKEQLQALGVNAENPPAYISSVAYGRQVYLKLSTNSHSTKVKAAFDAAVSGKSVSGDVELTNIIKNSSFKAVIYGGSAKDEVQIIDGNLGDLRDILKKGATFNRETPGVPIAYTTNFLKDNELAVIKNNSEYIETTSKAYTDGKINIDHSGGYVAQFNISWDEINYDPEGNEIVQHKNWSENNKSKLAHFTSSIYLPGNARNINVYAKECTGLAWEWWRTVIDDRNLPLVKNRNISIWGTTLYPKYSNSVDNPIE</sequence>